<sequence length="311" mass="32497">MKVAVLGAAGGIGQALALLLKLQLPAGTDLALYDIAPVTPGVAVDVSHIPTAVNVKGFSGEDPTPALEGADVVLISAGVARKPGMDRSDLFNINAGIVRGLIEKVAITCPKACVGIITNPVNTTVAIAAEVLKKAGVYDKRKLFGVTTLDVLRSETFVAELKGLNVSRTSVPVIGGHSGVTILPLLSQVQYAKWNEDEIEPLAKRIQNAGTEVVNAKAGGGSATLSMAQAAARFARSLVKGLSGETVVECTYVEGDGKYARFFSQPVRLGKEGVEEILPIGPLSNFEQQALENMLPTLRADIELGEKFING</sequence>
<accession>Q4QL89</accession>
<name>MDH_HAEI8</name>
<dbReference type="EC" id="1.1.1.37" evidence="1"/>
<dbReference type="EMBL" id="CP000057">
    <property type="protein sequence ID" value="AAX88208.1"/>
    <property type="molecule type" value="Genomic_DNA"/>
</dbReference>
<dbReference type="RefSeq" id="WP_005657108.1">
    <property type="nucleotide sequence ID" value="NC_007146.2"/>
</dbReference>
<dbReference type="SMR" id="Q4QL89"/>
<dbReference type="GeneID" id="93220213"/>
<dbReference type="KEGG" id="hit:NTHI1381"/>
<dbReference type="HOGENOM" id="CLU_047181_0_1_6"/>
<dbReference type="Proteomes" id="UP000002525">
    <property type="component" value="Chromosome"/>
</dbReference>
<dbReference type="GO" id="GO:0005737">
    <property type="term" value="C:cytoplasm"/>
    <property type="evidence" value="ECO:0007669"/>
    <property type="project" value="TreeGrafter"/>
</dbReference>
<dbReference type="GO" id="GO:0030060">
    <property type="term" value="F:L-malate dehydrogenase (NAD+) activity"/>
    <property type="evidence" value="ECO:0007669"/>
    <property type="project" value="UniProtKB-UniRule"/>
</dbReference>
<dbReference type="GO" id="GO:0006108">
    <property type="term" value="P:malate metabolic process"/>
    <property type="evidence" value="ECO:0007669"/>
    <property type="project" value="InterPro"/>
</dbReference>
<dbReference type="GO" id="GO:0006099">
    <property type="term" value="P:tricarboxylic acid cycle"/>
    <property type="evidence" value="ECO:0007669"/>
    <property type="project" value="UniProtKB-UniRule"/>
</dbReference>
<dbReference type="CDD" id="cd01337">
    <property type="entry name" value="MDH_glyoxysomal_mitochondrial"/>
    <property type="match status" value="1"/>
</dbReference>
<dbReference type="FunFam" id="3.40.50.720:FF:000017">
    <property type="entry name" value="Malate dehydrogenase"/>
    <property type="match status" value="1"/>
</dbReference>
<dbReference type="FunFam" id="3.90.110.10:FF:000001">
    <property type="entry name" value="Malate dehydrogenase"/>
    <property type="match status" value="1"/>
</dbReference>
<dbReference type="Gene3D" id="3.90.110.10">
    <property type="entry name" value="Lactate dehydrogenase/glycoside hydrolase, family 4, C-terminal"/>
    <property type="match status" value="1"/>
</dbReference>
<dbReference type="Gene3D" id="3.40.50.720">
    <property type="entry name" value="NAD(P)-binding Rossmann-like Domain"/>
    <property type="match status" value="1"/>
</dbReference>
<dbReference type="HAMAP" id="MF_01516">
    <property type="entry name" value="Malate_dehydrog_1"/>
    <property type="match status" value="1"/>
</dbReference>
<dbReference type="InterPro" id="IPR001557">
    <property type="entry name" value="L-lactate/malate_DH"/>
</dbReference>
<dbReference type="InterPro" id="IPR022383">
    <property type="entry name" value="Lactate/malate_DH_C"/>
</dbReference>
<dbReference type="InterPro" id="IPR001236">
    <property type="entry name" value="Lactate/malate_DH_N"/>
</dbReference>
<dbReference type="InterPro" id="IPR015955">
    <property type="entry name" value="Lactate_DH/Glyco_Ohase_4_C"/>
</dbReference>
<dbReference type="InterPro" id="IPR001252">
    <property type="entry name" value="Malate_DH_AS"/>
</dbReference>
<dbReference type="InterPro" id="IPR010097">
    <property type="entry name" value="Malate_DH_type1"/>
</dbReference>
<dbReference type="InterPro" id="IPR023958">
    <property type="entry name" value="Malate_DH_type1_bac"/>
</dbReference>
<dbReference type="InterPro" id="IPR036291">
    <property type="entry name" value="NAD(P)-bd_dom_sf"/>
</dbReference>
<dbReference type="NCBIfam" id="TIGR01772">
    <property type="entry name" value="MDH_euk_gproteo"/>
    <property type="match status" value="1"/>
</dbReference>
<dbReference type="PANTHER" id="PTHR11540">
    <property type="entry name" value="MALATE AND LACTATE DEHYDROGENASE"/>
    <property type="match status" value="1"/>
</dbReference>
<dbReference type="PANTHER" id="PTHR11540:SF16">
    <property type="entry name" value="MALATE DEHYDROGENASE, MITOCHONDRIAL"/>
    <property type="match status" value="1"/>
</dbReference>
<dbReference type="Pfam" id="PF02866">
    <property type="entry name" value="Ldh_1_C"/>
    <property type="match status" value="1"/>
</dbReference>
<dbReference type="Pfam" id="PF00056">
    <property type="entry name" value="Ldh_1_N"/>
    <property type="match status" value="1"/>
</dbReference>
<dbReference type="PIRSF" id="PIRSF000102">
    <property type="entry name" value="Lac_mal_DH"/>
    <property type="match status" value="1"/>
</dbReference>
<dbReference type="SUPFAM" id="SSF56327">
    <property type="entry name" value="LDH C-terminal domain-like"/>
    <property type="match status" value="1"/>
</dbReference>
<dbReference type="SUPFAM" id="SSF51735">
    <property type="entry name" value="NAD(P)-binding Rossmann-fold domains"/>
    <property type="match status" value="1"/>
</dbReference>
<dbReference type="PROSITE" id="PS00068">
    <property type="entry name" value="MDH"/>
    <property type="match status" value="1"/>
</dbReference>
<comment type="function">
    <text evidence="1">Catalyzes the reversible oxidation of malate to oxaloacetate.</text>
</comment>
<comment type="catalytic activity">
    <reaction evidence="1">
        <text>(S)-malate + NAD(+) = oxaloacetate + NADH + H(+)</text>
        <dbReference type="Rhea" id="RHEA:21432"/>
        <dbReference type="ChEBI" id="CHEBI:15378"/>
        <dbReference type="ChEBI" id="CHEBI:15589"/>
        <dbReference type="ChEBI" id="CHEBI:16452"/>
        <dbReference type="ChEBI" id="CHEBI:57540"/>
        <dbReference type="ChEBI" id="CHEBI:57945"/>
        <dbReference type="EC" id="1.1.1.37"/>
    </reaction>
</comment>
<comment type="subunit">
    <text evidence="1">Homodimer.</text>
</comment>
<comment type="similarity">
    <text evidence="1">Belongs to the LDH/MDH superfamily. MDH type 1 family.</text>
</comment>
<reference key="1">
    <citation type="journal article" date="2005" name="J. Bacteriol.">
        <title>Genomic sequence of an otitis media isolate of nontypeable Haemophilus influenzae: comparative study with H. influenzae serotype d, strain KW20.</title>
        <authorList>
            <person name="Harrison A."/>
            <person name="Dyer D.W."/>
            <person name="Gillaspy A."/>
            <person name="Ray W.C."/>
            <person name="Mungur R."/>
            <person name="Carson M.B."/>
            <person name="Zhong H."/>
            <person name="Gipson J."/>
            <person name="Gipson M."/>
            <person name="Johnson L.S."/>
            <person name="Lewis L."/>
            <person name="Bakaletz L.O."/>
            <person name="Munson R.S. Jr."/>
        </authorList>
    </citation>
    <scope>NUCLEOTIDE SEQUENCE [LARGE SCALE GENOMIC DNA]</scope>
    <source>
        <strain>86-028NP</strain>
    </source>
</reference>
<proteinExistence type="inferred from homology"/>
<evidence type="ECO:0000255" key="1">
    <source>
        <dbReference type="HAMAP-Rule" id="MF_01516"/>
    </source>
</evidence>
<keyword id="KW-0520">NAD</keyword>
<keyword id="KW-0560">Oxidoreductase</keyword>
<keyword id="KW-0816">Tricarboxylic acid cycle</keyword>
<organism>
    <name type="scientific">Haemophilus influenzae (strain 86-028NP)</name>
    <dbReference type="NCBI Taxonomy" id="281310"/>
    <lineage>
        <taxon>Bacteria</taxon>
        <taxon>Pseudomonadati</taxon>
        <taxon>Pseudomonadota</taxon>
        <taxon>Gammaproteobacteria</taxon>
        <taxon>Pasteurellales</taxon>
        <taxon>Pasteurellaceae</taxon>
        <taxon>Haemophilus</taxon>
    </lineage>
</organism>
<feature type="chain" id="PRO_0000113307" description="Malate dehydrogenase">
    <location>
        <begin position="1"/>
        <end position="311"/>
    </location>
</feature>
<feature type="active site" description="Proton acceptor" evidence="1">
    <location>
        <position position="177"/>
    </location>
</feature>
<feature type="binding site" evidence="1">
    <location>
        <begin position="7"/>
        <end position="13"/>
    </location>
    <ligand>
        <name>NAD(+)</name>
        <dbReference type="ChEBI" id="CHEBI:57540"/>
    </ligand>
</feature>
<feature type="binding site" evidence="1">
    <location>
        <position position="34"/>
    </location>
    <ligand>
        <name>NAD(+)</name>
        <dbReference type="ChEBI" id="CHEBI:57540"/>
    </ligand>
</feature>
<feature type="binding site" evidence="1">
    <location>
        <position position="81"/>
    </location>
    <ligand>
        <name>substrate</name>
    </ligand>
</feature>
<feature type="binding site" evidence="1">
    <location>
        <position position="87"/>
    </location>
    <ligand>
        <name>substrate</name>
    </ligand>
</feature>
<feature type="binding site" evidence="1">
    <location>
        <position position="94"/>
    </location>
    <ligand>
        <name>NAD(+)</name>
        <dbReference type="ChEBI" id="CHEBI:57540"/>
    </ligand>
</feature>
<feature type="binding site" evidence="1">
    <location>
        <begin position="117"/>
        <end position="119"/>
    </location>
    <ligand>
        <name>NAD(+)</name>
        <dbReference type="ChEBI" id="CHEBI:57540"/>
    </ligand>
</feature>
<feature type="binding site" evidence="1">
    <location>
        <position position="119"/>
    </location>
    <ligand>
        <name>substrate</name>
    </ligand>
</feature>
<feature type="binding site" evidence="1">
    <location>
        <position position="153"/>
    </location>
    <ligand>
        <name>substrate</name>
    </ligand>
</feature>
<feature type="binding site" evidence="1">
    <location>
        <position position="227"/>
    </location>
    <ligand>
        <name>NAD(+)</name>
        <dbReference type="ChEBI" id="CHEBI:57540"/>
    </ligand>
</feature>
<gene>
    <name evidence="1" type="primary">mdh</name>
    <name type="ordered locus">NTHI1381</name>
</gene>
<protein>
    <recommendedName>
        <fullName evidence="1">Malate dehydrogenase</fullName>
        <ecNumber evidence="1">1.1.1.37</ecNumber>
    </recommendedName>
</protein>